<reference key="1">
    <citation type="journal article" date="2004" name="Proc. Natl. Acad. Sci. U.S.A.">
        <title>Genome sequence of the enterobacterial phytopathogen Erwinia carotovora subsp. atroseptica and characterization of virulence factors.</title>
        <authorList>
            <person name="Bell K.S."/>
            <person name="Sebaihia M."/>
            <person name="Pritchard L."/>
            <person name="Holden M.T.G."/>
            <person name="Hyman L.J."/>
            <person name="Holeva M.C."/>
            <person name="Thomson N.R."/>
            <person name="Bentley S.D."/>
            <person name="Churcher L.J.C."/>
            <person name="Mungall K."/>
            <person name="Atkin R."/>
            <person name="Bason N."/>
            <person name="Brooks K."/>
            <person name="Chillingworth T."/>
            <person name="Clark K."/>
            <person name="Doggett J."/>
            <person name="Fraser A."/>
            <person name="Hance Z."/>
            <person name="Hauser H."/>
            <person name="Jagels K."/>
            <person name="Moule S."/>
            <person name="Norbertczak H."/>
            <person name="Ormond D."/>
            <person name="Price C."/>
            <person name="Quail M.A."/>
            <person name="Sanders M."/>
            <person name="Walker D."/>
            <person name="Whitehead S."/>
            <person name="Salmond G.P.C."/>
            <person name="Birch P.R.J."/>
            <person name="Parkhill J."/>
            <person name="Toth I.K."/>
        </authorList>
    </citation>
    <scope>NUCLEOTIDE SEQUENCE [LARGE SCALE GENOMIC DNA]</scope>
    <source>
        <strain>SCRI 1043 / ATCC BAA-672</strain>
    </source>
</reference>
<sequence>MSESFDASAFLKTVTSQPGVYRMYDAGNTVIYVGKAKDLKKRLASYFRSHVASRKTEALVKSIKHIDVTITHTETEALLLEHNYIKLYQPRYNVLLRDDKSYPMIFLSGDAHPRLTVHRGAKHAKGEYFGPFPNGNAVRETLILLQKLFPVRQCENSVYRNRSRPCLQYQIGRCLGPCVSGLVSEEDYRQQVEYVRLFLSGKDQQVLNQLISRMESASRDLRFEDAARIRDQIQAVRRVTEKQFVSGDGEDLDVISVAFDAGMACVYVLFIRQGKVLGSRSYFPKVPGGTELGEVVQTFVGQFYLQGNSGRTLPTEILLDFTLPDKDLLTESLTAVAGRKVQIQTKPRGDRARYLKLARTNAATALVTKLSQQSTIHQRLAALANVLQLPEIHRMECFDISHTMGEQTVASCVVFDANGPLRSEYRRYNISGITPGDDYAAMAQVLQRRYGKALDDSKIPDVIVIDGGKGQLGQAQAVFDSLQVSWDKNKPLLLGVAKGSDRKAGLETLFLEATGEGMALPADSPALHVIQHIRDDSHDHAIGGHRKKRAKVKNTSTLELIEGVGPKRRQTLLKYMGGLQPLMNASIEEIANVPGISHGLAEKIFHALKH</sequence>
<dbReference type="EMBL" id="BX950851">
    <property type="protein sequence ID" value="CAG75781.1"/>
    <property type="molecule type" value="Genomic_DNA"/>
</dbReference>
<dbReference type="RefSeq" id="WP_011094413.1">
    <property type="nucleotide sequence ID" value="NC_004547.2"/>
</dbReference>
<dbReference type="SMR" id="Q6D363"/>
<dbReference type="STRING" id="218491.ECA2881"/>
<dbReference type="GeneID" id="57208437"/>
<dbReference type="KEGG" id="eca:ECA2881"/>
<dbReference type="PATRIC" id="fig|218491.5.peg.2919"/>
<dbReference type="eggNOG" id="COG0322">
    <property type="taxonomic scope" value="Bacteria"/>
</dbReference>
<dbReference type="HOGENOM" id="CLU_014841_3_2_6"/>
<dbReference type="OrthoDB" id="9804933at2"/>
<dbReference type="Proteomes" id="UP000007966">
    <property type="component" value="Chromosome"/>
</dbReference>
<dbReference type="GO" id="GO:0005737">
    <property type="term" value="C:cytoplasm"/>
    <property type="evidence" value="ECO:0007669"/>
    <property type="project" value="UniProtKB-SubCell"/>
</dbReference>
<dbReference type="GO" id="GO:0009380">
    <property type="term" value="C:excinuclease repair complex"/>
    <property type="evidence" value="ECO:0007669"/>
    <property type="project" value="InterPro"/>
</dbReference>
<dbReference type="GO" id="GO:0003677">
    <property type="term" value="F:DNA binding"/>
    <property type="evidence" value="ECO:0007669"/>
    <property type="project" value="UniProtKB-UniRule"/>
</dbReference>
<dbReference type="GO" id="GO:0009381">
    <property type="term" value="F:excinuclease ABC activity"/>
    <property type="evidence" value="ECO:0007669"/>
    <property type="project" value="UniProtKB-UniRule"/>
</dbReference>
<dbReference type="GO" id="GO:0006289">
    <property type="term" value="P:nucleotide-excision repair"/>
    <property type="evidence" value="ECO:0007669"/>
    <property type="project" value="UniProtKB-UniRule"/>
</dbReference>
<dbReference type="GO" id="GO:0009432">
    <property type="term" value="P:SOS response"/>
    <property type="evidence" value="ECO:0007669"/>
    <property type="project" value="UniProtKB-UniRule"/>
</dbReference>
<dbReference type="CDD" id="cd10434">
    <property type="entry name" value="GIY-YIG_UvrC_Cho"/>
    <property type="match status" value="1"/>
</dbReference>
<dbReference type="FunFam" id="1.10.150.20:FF:000005">
    <property type="entry name" value="UvrABC system protein C"/>
    <property type="match status" value="1"/>
</dbReference>
<dbReference type="FunFam" id="3.30.420.340:FF:000001">
    <property type="entry name" value="UvrABC system protein C"/>
    <property type="match status" value="1"/>
</dbReference>
<dbReference type="FunFam" id="3.40.1440.10:FF:000001">
    <property type="entry name" value="UvrABC system protein C"/>
    <property type="match status" value="1"/>
</dbReference>
<dbReference type="FunFam" id="4.10.860.10:FF:000002">
    <property type="entry name" value="UvrABC system protein C"/>
    <property type="match status" value="1"/>
</dbReference>
<dbReference type="Gene3D" id="1.10.150.20">
    <property type="entry name" value="5' to 3' exonuclease, C-terminal subdomain"/>
    <property type="match status" value="1"/>
</dbReference>
<dbReference type="Gene3D" id="3.40.1440.10">
    <property type="entry name" value="GIY-YIG endonuclease"/>
    <property type="match status" value="1"/>
</dbReference>
<dbReference type="Gene3D" id="4.10.860.10">
    <property type="entry name" value="UVR domain"/>
    <property type="match status" value="1"/>
</dbReference>
<dbReference type="Gene3D" id="3.30.420.340">
    <property type="entry name" value="UvrC, RNAse H endonuclease domain"/>
    <property type="match status" value="1"/>
</dbReference>
<dbReference type="HAMAP" id="MF_00203">
    <property type="entry name" value="UvrC"/>
    <property type="match status" value="1"/>
</dbReference>
<dbReference type="InterPro" id="IPR000305">
    <property type="entry name" value="GIY-YIG_endonuc"/>
</dbReference>
<dbReference type="InterPro" id="IPR035901">
    <property type="entry name" value="GIY-YIG_endonuc_sf"/>
</dbReference>
<dbReference type="InterPro" id="IPR047296">
    <property type="entry name" value="GIY-YIG_UvrC_Cho"/>
</dbReference>
<dbReference type="InterPro" id="IPR003583">
    <property type="entry name" value="Hlx-hairpin-Hlx_DNA-bd_motif"/>
</dbReference>
<dbReference type="InterPro" id="IPR010994">
    <property type="entry name" value="RuvA_2-like"/>
</dbReference>
<dbReference type="InterPro" id="IPR001943">
    <property type="entry name" value="UVR_dom"/>
</dbReference>
<dbReference type="InterPro" id="IPR036876">
    <property type="entry name" value="UVR_dom_sf"/>
</dbReference>
<dbReference type="InterPro" id="IPR050066">
    <property type="entry name" value="UvrABC_protein_C"/>
</dbReference>
<dbReference type="InterPro" id="IPR004791">
    <property type="entry name" value="UvrC"/>
</dbReference>
<dbReference type="InterPro" id="IPR001162">
    <property type="entry name" value="UvrC_RNase_H_dom"/>
</dbReference>
<dbReference type="InterPro" id="IPR038476">
    <property type="entry name" value="UvrC_RNase_H_dom_sf"/>
</dbReference>
<dbReference type="NCBIfam" id="NF001824">
    <property type="entry name" value="PRK00558.1-5"/>
    <property type="match status" value="1"/>
</dbReference>
<dbReference type="NCBIfam" id="TIGR00194">
    <property type="entry name" value="uvrC"/>
    <property type="match status" value="1"/>
</dbReference>
<dbReference type="PANTHER" id="PTHR30562:SF1">
    <property type="entry name" value="UVRABC SYSTEM PROTEIN C"/>
    <property type="match status" value="1"/>
</dbReference>
<dbReference type="PANTHER" id="PTHR30562">
    <property type="entry name" value="UVRC/OXIDOREDUCTASE"/>
    <property type="match status" value="1"/>
</dbReference>
<dbReference type="Pfam" id="PF01541">
    <property type="entry name" value="GIY-YIG"/>
    <property type="match status" value="1"/>
</dbReference>
<dbReference type="Pfam" id="PF14520">
    <property type="entry name" value="HHH_5"/>
    <property type="match status" value="1"/>
</dbReference>
<dbReference type="Pfam" id="PF02151">
    <property type="entry name" value="UVR"/>
    <property type="match status" value="1"/>
</dbReference>
<dbReference type="Pfam" id="PF22920">
    <property type="entry name" value="UvrC_RNaseH"/>
    <property type="match status" value="1"/>
</dbReference>
<dbReference type="Pfam" id="PF08459">
    <property type="entry name" value="UvrC_RNaseH_dom"/>
    <property type="match status" value="1"/>
</dbReference>
<dbReference type="SMART" id="SM00465">
    <property type="entry name" value="GIYc"/>
    <property type="match status" value="1"/>
</dbReference>
<dbReference type="SMART" id="SM00278">
    <property type="entry name" value="HhH1"/>
    <property type="match status" value="2"/>
</dbReference>
<dbReference type="SUPFAM" id="SSF46600">
    <property type="entry name" value="C-terminal UvrC-binding domain of UvrB"/>
    <property type="match status" value="1"/>
</dbReference>
<dbReference type="SUPFAM" id="SSF82771">
    <property type="entry name" value="GIY-YIG endonuclease"/>
    <property type="match status" value="1"/>
</dbReference>
<dbReference type="SUPFAM" id="SSF47781">
    <property type="entry name" value="RuvA domain 2-like"/>
    <property type="match status" value="1"/>
</dbReference>
<dbReference type="PROSITE" id="PS50164">
    <property type="entry name" value="GIY_YIG"/>
    <property type="match status" value="1"/>
</dbReference>
<dbReference type="PROSITE" id="PS50151">
    <property type="entry name" value="UVR"/>
    <property type="match status" value="1"/>
</dbReference>
<dbReference type="PROSITE" id="PS50165">
    <property type="entry name" value="UVRC"/>
    <property type="match status" value="1"/>
</dbReference>
<keyword id="KW-0963">Cytoplasm</keyword>
<keyword id="KW-0227">DNA damage</keyword>
<keyword id="KW-0228">DNA excision</keyword>
<keyword id="KW-0234">DNA repair</keyword>
<keyword id="KW-0267">Excision nuclease</keyword>
<keyword id="KW-1185">Reference proteome</keyword>
<keyword id="KW-0742">SOS response</keyword>
<protein>
    <recommendedName>
        <fullName evidence="1">UvrABC system protein C</fullName>
        <shortName evidence="1">Protein UvrC</shortName>
    </recommendedName>
    <alternativeName>
        <fullName evidence="1">Excinuclease ABC subunit C</fullName>
    </alternativeName>
</protein>
<organism>
    <name type="scientific">Pectobacterium atrosepticum (strain SCRI 1043 / ATCC BAA-672)</name>
    <name type="common">Erwinia carotovora subsp. atroseptica</name>
    <dbReference type="NCBI Taxonomy" id="218491"/>
    <lineage>
        <taxon>Bacteria</taxon>
        <taxon>Pseudomonadati</taxon>
        <taxon>Pseudomonadota</taxon>
        <taxon>Gammaproteobacteria</taxon>
        <taxon>Enterobacterales</taxon>
        <taxon>Pectobacteriaceae</taxon>
        <taxon>Pectobacterium</taxon>
    </lineage>
</organism>
<feature type="chain" id="PRO_0000264890" description="UvrABC system protein C">
    <location>
        <begin position="1"/>
        <end position="610"/>
    </location>
</feature>
<feature type="domain" description="GIY-YIG" evidence="1">
    <location>
        <begin position="16"/>
        <end position="94"/>
    </location>
</feature>
<feature type="domain" description="UVR" evidence="1">
    <location>
        <begin position="204"/>
        <end position="239"/>
    </location>
</feature>
<accession>Q6D363</accession>
<proteinExistence type="inferred from homology"/>
<gene>
    <name evidence="1" type="primary">uvrC</name>
    <name type="ordered locus">ECA2881</name>
</gene>
<name>UVRC_PECAS</name>
<evidence type="ECO:0000255" key="1">
    <source>
        <dbReference type="HAMAP-Rule" id="MF_00203"/>
    </source>
</evidence>
<comment type="function">
    <text evidence="1">The UvrABC repair system catalyzes the recognition and processing of DNA lesions. UvrC both incises the 5' and 3' sides of the lesion. The N-terminal half is responsible for the 3' incision and the C-terminal half is responsible for the 5' incision.</text>
</comment>
<comment type="subunit">
    <text evidence="1">Interacts with UvrB in an incision complex.</text>
</comment>
<comment type="subcellular location">
    <subcellularLocation>
        <location evidence="1">Cytoplasm</location>
    </subcellularLocation>
</comment>
<comment type="similarity">
    <text evidence="1">Belongs to the UvrC family.</text>
</comment>